<evidence type="ECO:0000250" key="1"/>
<evidence type="ECO:0000255" key="2">
    <source>
        <dbReference type="PROSITE-ProRule" id="PRU00114"/>
    </source>
</evidence>
<evidence type="ECO:0000305" key="3"/>
<name>B2MG_PAPAN</name>
<proteinExistence type="inferred from homology"/>
<protein>
    <recommendedName>
        <fullName>Beta-2-microglobulin</fullName>
    </recommendedName>
</protein>
<organism>
    <name type="scientific">Papio anubis</name>
    <name type="common">Olive baboon</name>
    <dbReference type="NCBI Taxonomy" id="9555"/>
    <lineage>
        <taxon>Eukaryota</taxon>
        <taxon>Metazoa</taxon>
        <taxon>Chordata</taxon>
        <taxon>Craniata</taxon>
        <taxon>Vertebrata</taxon>
        <taxon>Euteleostomi</taxon>
        <taxon>Mammalia</taxon>
        <taxon>Eutheria</taxon>
        <taxon>Euarchontoglires</taxon>
        <taxon>Primates</taxon>
        <taxon>Haplorrhini</taxon>
        <taxon>Catarrhini</taxon>
        <taxon>Cercopithecidae</taxon>
        <taxon>Cercopithecinae</taxon>
        <taxon>Papio</taxon>
    </lineage>
</organism>
<comment type="function">
    <text evidence="1">Component of the class I major histocompatibility complex (MHC). Involved in the presentation of peptide antigens to the immune system (By similarity).</text>
</comment>
<comment type="subunit">
    <text evidence="1">Heterodimer of an alpha chain and a beta chain. Beta-2-microglobulin is the beta-chain of major histocompatibility complex class I molecules (By similarity).</text>
</comment>
<comment type="subcellular location">
    <subcellularLocation>
        <location evidence="1">Secreted</location>
    </subcellularLocation>
</comment>
<comment type="similarity">
    <text evidence="3">Belongs to the beta-2-microglobulin family.</text>
</comment>
<gene>
    <name type="primary">B2M</name>
</gene>
<feature type="signal peptide" evidence="1">
    <location>
        <begin position="1"/>
        <end position="20"/>
    </location>
</feature>
<feature type="chain" id="PRO_0000018786" description="Beta-2-microglobulin">
    <location>
        <begin position="21"/>
        <end position="119"/>
    </location>
</feature>
<feature type="domain" description="Ig-like C1-type">
    <location>
        <begin position="25"/>
        <end position="114"/>
    </location>
</feature>
<feature type="disulfide bond" evidence="2">
    <location>
        <begin position="45"/>
        <end position="100"/>
    </location>
</feature>
<accession>Q6T672</accession>
<reference key="1">
    <citation type="submission" date="2003-10" db="EMBL/GenBank/DDBJ databases">
        <title>Sequence of the olive baboon (Papio anubis) beta-2-microglobulin.</title>
        <authorList>
            <person name="Langat D.K."/>
            <person name="Morales P.J."/>
            <person name="Fazleabas A.T."/>
            <person name="Hunt J.S."/>
        </authorList>
    </citation>
    <scope>NUCLEOTIDE SEQUENCE [MRNA]</scope>
    <source>
        <tissue>Term placenta</tissue>
    </source>
</reference>
<dbReference type="EMBL" id="AY434098">
    <property type="protein sequence ID" value="AAR12070.1"/>
    <property type="molecule type" value="mRNA"/>
</dbReference>
<dbReference type="RefSeq" id="NP_001167006.1">
    <property type="nucleotide sequence ID" value="NM_001173535.1"/>
</dbReference>
<dbReference type="SMR" id="Q6T672"/>
<dbReference type="STRING" id="9555.ENSPANP00000013995"/>
<dbReference type="Ensembl" id="ENSPANT00000026151.3">
    <property type="protein sequence ID" value="ENSPANP00000013995.1"/>
    <property type="gene ID" value="ENSPANG00000018027.3"/>
</dbReference>
<dbReference type="GeneID" id="100381194"/>
<dbReference type="KEGG" id="panu:100381194"/>
<dbReference type="CTD" id="567"/>
<dbReference type="eggNOG" id="ENOG502S8GM">
    <property type="taxonomic scope" value="Eukaryota"/>
</dbReference>
<dbReference type="GeneTree" id="ENSGT00690000102227"/>
<dbReference type="HOGENOM" id="CLU_163066_0_0_1"/>
<dbReference type="OMA" id="EDVFSCR"/>
<dbReference type="Proteomes" id="UP000028761">
    <property type="component" value="Chromosome 7"/>
</dbReference>
<dbReference type="Bgee" id="ENSPANG00000018027">
    <property type="expression patterns" value="Expressed in perirenal fat and 65 other cell types or tissues"/>
</dbReference>
<dbReference type="GO" id="GO:0005829">
    <property type="term" value="C:cytosol"/>
    <property type="evidence" value="ECO:0007669"/>
    <property type="project" value="Ensembl"/>
</dbReference>
<dbReference type="GO" id="GO:0009897">
    <property type="term" value="C:external side of plasma membrane"/>
    <property type="evidence" value="ECO:0007669"/>
    <property type="project" value="Ensembl"/>
</dbReference>
<dbReference type="GO" id="GO:0005576">
    <property type="term" value="C:extracellular region"/>
    <property type="evidence" value="ECO:0007669"/>
    <property type="project" value="UniProtKB-SubCell"/>
</dbReference>
<dbReference type="GO" id="GO:0005794">
    <property type="term" value="C:Golgi apparatus"/>
    <property type="evidence" value="ECO:0007669"/>
    <property type="project" value="Ensembl"/>
</dbReference>
<dbReference type="GO" id="GO:1990712">
    <property type="term" value="C:HFE-transferrin receptor complex"/>
    <property type="evidence" value="ECO:0007669"/>
    <property type="project" value="Ensembl"/>
</dbReference>
<dbReference type="GO" id="GO:0042824">
    <property type="term" value="C:MHC class I peptide loading complex"/>
    <property type="evidence" value="ECO:0007669"/>
    <property type="project" value="Ensembl"/>
</dbReference>
<dbReference type="GO" id="GO:0042612">
    <property type="term" value="C:MHC class I protein complex"/>
    <property type="evidence" value="ECO:0007669"/>
    <property type="project" value="UniProtKB-KW"/>
</dbReference>
<dbReference type="GO" id="GO:0042803">
    <property type="term" value="F:protein homodimerization activity"/>
    <property type="evidence" value="ECO:0007669"/>
    <property type="project" value="Ensembl"/>
</dbReference>
<dbReference type="GO" id="GO:0005198">
    <property type="term" value="F:structural molecule activity"/>
    <property type="evidence" value="ECO:0007669"/>
    <property type="project" value="Ensembl"/>
</dbReference>
<dbReference type="GO" id="GO:1990000">
    <property type="term" value="P:amyloid fibril formation"/>
    <property type="evidence" value="ECO:0007669"/>
    <property type="project" value="Ensembl"/>
</dbReference>
<dbReference type="GO" id="GO:0019885">
    <property type="term" value="P:antigen processing and presentation of endogenous peptide antigen via MHC class I"/>
    <property type="evidence" value="ECO:0007669"/>
    <property type="project" value="Ensembl"/>
</dbReference>
<dbReference type="GO" id="GO:0002481">
    <property type="term" value="P:antigen processing and presentation of exogenous protein antigen via MHC class Ib, TAP-dependent"/>
    <property type="evidence" value="ECO:0007669"/>
    <property type="project" value="Ensembl"/>
</dbReference>
<dbReference type="GO" id="GO:0071283">
    <property type="term" value="P:cellular response to iron(III) ion"/>
    <property type="evidence" value="ECO:0007669"/>
    <property type="project" value="Ensembl"/>
</dbReference>
<dbReference type="GO" id="GO:0071316">
    <property type="term" value="P:cellular response to nicotine"/>
    <property type="evidence" value="ECO:0007669"/>
    <property type="project" value="Ensembl"/>
</dbReference>
<dbReference type="GO" id="GO:0006879">
    <property type="term" value="P:intracellular iron ion homeostasis"/>
    <property type="evidence" value="ECO:0007669"/>
    <property type="project" value="Ensembl"/>
</dbReference>
<dbReference type="GO" id="GO:0006826">
    <property type="term" value="P:iron ion transport"/>
    <property type="evidence" value="ECO:0007669"/>
    <property type="project" value="Ensembl"/>
</dbReference>
<dbReference type="GO" id="GO:0007611">
    <property type="term" value="P:learning or memory"/>
    <property type="evidence" value="ECO:0007669"/>
    <property type="project" value="Ensembl"/>
</dbReference>
<dbReference type="GO" id="GO:0060586">
    <property type="term" value="P:multicellular organismal-level iron ion homeostasis"/>
    <property type="evidence" value="ECO:0007669"/>
    <property type="project" value="Ensembl"/>
</dbReference>
<dbReference type="GO" id="GO:0050680">
    <property type="term" value="P:negative regulation of epithelial cell proliferation"/>
    <property type="evidence" value="ECO:0007669"/>
    <property type="project" value="Ensembl"/>
</dbReference>
<dbReference type="GO" id="GO:2000978">
    <property type="term" value="P:negative regulation of forebrain neuron differentiation"/>
    <property type="evidence" value="ECO:0007669"/>
    <property type="project" value="Ensembl"/>
</dbReference>
<dbReference type="GO" id="GO:0050768">
    <property type="term" value="P:negative regulation of neurogenesis"/>
    <property type="evidence" value="ECO:0007669"/>
    <property type="project" value="Ensembl"/>
</dbReference>
<dbReference type="GO" id="GO:0010977">
    <property type="term" value="P:negative regulation of neuron projection development"/>
    <property type="evidence" value="ECO:0007669"/>
    <property type="project" value="Ensembl"/>
</dbReference>
<dbReference type="GO" id="GO:0002502">
    <property type="term" value="P:peptide antigen assembly with MHC class I protein complex"/>
    <property type="evidence" value="ECO:0007669"/>
    <property type="project" value="Ensembl"/>
</dbReference>
<dbReference type="GO" id="GO:2000774">
    <property type="term" value="P:positive regulation of cellular senescence"/>
    <property type="evidence" value="ECO:0007669"/>
    <property type="project" value="Ensembl"/>
</dbReference>
<dbReference type="GO" id="GO:0048260">
    <property type="term" value="P:positive regulation of receptor-mediated endocytosis"/>
    <property type="evidence" value="ECO:0007669"/>
    <property type="project" value="Ensembl"/>
</dbReference>
<dbReference type="GO" id="GO:0002726">
    <property type="term" value="P:positive regulation of T cell cytokine production"/>
    <property type="evidence" value="ECO:0007669"/>
    <property type="project" value="Ensembl"/>
</dbReference>
<dbReference type="GO" id="GO:0001916">
    <property type="term" value="P:positive regulation of T cell mediated cytotoxicity"/>
    <property type="evidence" value="ECO:0007669"/>
    <property type="project" value="Ensembl"/>
</dbReference>
<dbReference type="GO" id="GO:0051289">
    <property type="term" value="P:protein homotetramerization"/>
    <property type="evidence" value="ECO:0007669"/>
    <property type="project" value="Ensembl"/>
</dbReference>
<dbReference type="GO" id="GO:0042026">
    <property type="term" value="P:protein refolding"/>
    <property type="evidence" value="ECO:0007669"/>
    <property type="project" value="Ensembl"/>
</dbReference>
<dbReference type="GO" id="GO:0045646">
    <property type="term" value="P:regulation of erythrocyte differentiation"/>
    <property type="evidence" value="ECO:0007669"/>
    <property type="project" value="Ensembl"/>
</dbReference>
<dbReference type="GO" id="GO:0034756">
    <property type="term" value="P:regulation of iron ion transport"/>
    <property type="evidence" value="ECO:0007669"/>
    <property type="project" value="Ensembl"/>
</dbReference>
<dbReference type="GO" id="GO:0002237">
    <property type="term" value="P:response to molecule of bacterial origin"/>
    <property type="evidence" value="ECO:0007669"/>
    <property type="project" value="Ensembl"/>
</dbReference>
<dbReference type="GO" id="GO:0007608">
    <property type="term" value="P:sensory perception of smell"/>
    <property type="evidence" value="ECO:0007669"/>
    <property type="project" value="Ensembl"/>
</dbReference>
<dbReference type="GO" id="GO:0033077">
    <property type="term" value="P:T cell differentiation in thymus"/>
    <property type="evidence" value="ECO:0007669"/>
    <property type="project" value="Ensembl"/>
</dbReference>
<dbReference type="GO" id="GO:0001913">
    <property type="term" value="P:T cell mediated cytotoxicity"/>
    <property type="evidence" value="ECO:0007669"/>
    <property type="project" value="Ensembl"/>
</dbReference>
<dbReference type="CDD" id="cd05770">
    <property type="entry name" value="IgC1_beta2m"/>
    <property type="match status" value="1"/>
</dbReference>
<dbReference type="FunFam" id="2.60.40.10:FF:001005">
    <property type="entry name" value="Beta-2-microglobulin"/>
    <property type="match status" value="1"/>
</dbReference>
<dbReference type="Gene3D" id="2.60.40.10">
    <property type="entry name" value="Immunoglobulins"/>
    <property type="match status" value="1"/>
</dbReference>
<dbReference type="InterPro" id="IPR015707">
    <property type="entry name" value="B2Microglobulin"/>
</dbReference>
<dbReference type="InterPro" id="IPR007110">
    <property type="entry name" value="Ig-like_dom"/>
</dbReference>
<dbReference type="InterPro" id="IPR036179">
    <property type="entry name" value="Ig-like_dom_sf"/>
</dbReference>
<dbReference type="InterPro" id="IPR013783">
    <property type="entry name" value="Ig-like_fold"/>
</dbReference>
<dbReference type="InterPro" id="IPR003006">
    <property type="entry name" value="Ig/MHC_CS"/>
</dbReference>
<dbReference type="InterPro" id="IPR003597">
    <property type="entry name" value="Ig_C1-set"/>
</dbReference>
<dbReference type="InterPro" id="IPR050160">
    <property type="entry name" value="MHC/Immunoglobulin"/>
</dbReference>
<dbReference type="PANTHER" id="PTHR19944:SF62">
    <property type="entry name" value="BETA-2-MICROGLOBULIN"/>
    <property type="match status" value="1"/>
</dbReference>
<dbReference type="PANTHER" id="PTHR19944">
    <property type="entry name" value="MHC CLASS II-RELATED"/>
    <property type="match status" value="1"/>
</dbReference>
<dbReference type="Pfam" id="PF07654">
    <property type="entry name" value="C1-set"/>
    <property type="match status" value="1"/>
</dbReference>
<dbReference type="SMART" id="SM00407">
    <property type="entry name" value="IGc1"/>
    <property type="match status" value="1"/>
</dbReference>
<dbReference type="SUPFAM" id="SSF48726">
    <property type="entry name" value="Immunoglobulin"/>
    <property type="match status" value="1"/>
</dbReference>
<dbReference type="PROSITE" id="PS50835">
    <property type="entry name" value="IG_LIKE"/>
    <property type="match status" value="1"/>
</dbReference>
<dbReference type="PROSITE" id="PS00290">
    <property type="entry name" value="IG_MHC"/>
    <property type="match status" value="1"/>
</dbReference>
<keyword id="KW-1015">Disulfide bond</keyword>
<keyword id="KW-0391">Immunity</keyword>
<keyword id="KW-0393">Immunoglobulin domain</keyword>
<keyword id="KW-0490">MHC I</keyword>
<keyword id="KW-1185">Reference proteome</keyword>
<keyword id="KW-0964">Secreted</keyword>
<keyword id="KW-0732">Signal</keyword>
<sequence>MSRSVALAVLALLSLSGLEAIQRTPKIQVYSRHPPENGKPNFLNCYVSGFHPSDIEVDLLKNGEKMGKVEHSDLSFSKDWSFYLLYYTEFTPNEKDEYACRVNHVTLSGPRTVKWDRDM</sequence>